<organism>
    <name type="scientific">Francisella philomiragia subsp. philomiragia (strain ATCC 25017 / CCUG 19701 / FSC 153 / O#319-036)</name>
    <dbReference type="NCBI Taxonomy" id="484022"/>
    <lineage>
        <taxon>Bacteria</taxon>
        <taxon>Pseudomonadati</taxon>
        <taxon>Pseudomonadota</taxon>
        <taxon>Gammaproteobacteria</taxon>
        <taxon>Thiotrichales</taxon>
        <taxon>Francisellaceae</taxon>
        <taxon>Francisella</taxon>
    </lineage>
</organism>
<comment type="function">
    <text evidence="1">Catalyzes the reversible formation of acyl-phosphate (acyl-PO(4)) from acyl-[acyl-carrier-protein] (acyl-ACP). This enzyme utilizes acyl-ACP as fatty acyl donor, but not acyl-CoA.</text>
</comment>
<comment type="catalytic activity">
    <reaction evidence="1">
        <text>a fatty acyl-[ACP] + phosphate = an acyl phosphate + holo-[ACP]</text>
        <dbReference type="Rhea" id="RHEA:42292"/>
        <dbReference type="Rhea" id="RHEA-COMP:9685"/>
        <dbReference type="Rhea" id="RHEA-COMP:14125"/>
        <dbReference type="ChEBI" id="CHEBI:43474"/>
        <dbReference type="ChEBI" id="CHEBI:59918"/>
        <dbReference type="ChEBI" id="CHEBI:64479"/>
        <dbReference type="ChEBI" id="CHEBI:138651"/>
        <dbReference type="EC" id="2.3.1.274"/>
    </reaction>
</comment>
<comment type="pathway">
    <text evidence="1">Lipid metabolism; phospholipid metabolism.</text>
</comment>
<comment type="subunit">
    <text evidence="1">Homodimer. Probably interacts with PlsY.</text>
</comment>
<comment type="subcellular location">
    <subcellularLocation>
        <location evidence="1">Cytoplasm</location>
    </subcellularLocation>
    <text evidence="1">Associated with the membrane possibly through PlsY.</text>
</comment>
<comment type="similarity">
    <text evidence="1">Belongs to the PlsX family.</text>
</comment>
<evidence type="ECO:0000255" key="1">
    <source>
        <dbReference type="HAMAP-Rule" id="MF_00019"/>
    </source>
</evidence>
<sequence>MGYKISIDAMGGDNGLNTTIPAALEAVKKDSNLQIVLVGDHHKVKRALDRYSKVKKIKLPVLQRIAIHHASETVGMDESPSIAVRKKKDSSMRVAINLVKDGTVDACVSAGNTGALMATSKFVLKTVNGVDRPAIVYALPAFNRDTKQLSKTYMLDLGANVVCSSEQLFQFAIMGSILAASSKGLAEPRVSLLNIGEEEMKGLDNIKNASKLLQGCDFINYQGYIEGKHIFDDTTDVIVCDGFVGNVSLKTMEGSLRLIESLIKKSITETSLLMKIPVIMSLPLFKKMKKGMNLDSFNGASLLGLTGIVVKSHGSASANAFETAIYEAVKEIKHNIPKTIQESLEKVL</sequence>
<reference key="1">
    <citation type="submission" date="2007-12" db="EMBL/GenBank/DDBJ databases">
        <title>Complete sequence of chromosome of Francisella philomiragia subsp. philomiragia ATCC 25017.</title>
        <authorList>
            <consortium name="US DOE Joint Genome Institute"/>
            <person name="Copeland A."/>
            <person name="Lucas S."/>
            <person name="Lapidus A."/>
            <person name="Barry K."/>
            <person name="Detter J.C."/>
            <person name="Glavina del Rio T."/>
            <person name="Hammon N."/>
            <person name="Israni S."/>
            <person name="Dalin E."/>
            <person name="Tice H."/>
            <person name="Pitluck S."/>
            <person name="Chain P."/>
            <person name="Malfatti S."/>
            <person name="Shin M."/>
            <person name="Vergez L."/>
            <person name="Schmutz J."/>
            <person name="Larimer F."/>
            <person name="Land M."/>
            <person name="Hauser L."/>
            <person name="Richardson P."/>
        </authorList>
    </citation>
    <scope>NUCLEOTIDE SEQUENCE [LARGE SCALE GENOMIC DNA]</scope>
    <source>
        <strain>ATCC 25017 / CCUG 19701 / FSC 153 / O#319-036</strain>
    </source>
</reference>
<protein>
    <recommendedName>
        <fullName evidence="1">Phosphate acyltransferase</fullName>
        <ecNumber evidence="1">2.3.1.274</ecNumber>
    </recommendedName>
    <alternativeName>
        <fullName evidence="1">Acyl-ACP phosphotransacylase</fullName>
    </alternativeName>
    <alternativeName>
        <fullName evidence="1">Acyl-[acyl-carrier-protein]--phosphate acyltransferase</fullName>
    </alternativeName>
    <alternativeName>
        <fullName evidence="1">Phosphate-acyl-ACP acyltransferase</fullName>
    </alternativeName>
</protein>
<keyword id="KW-0963">Cytoplasm</keyword>
<keyword id="KW-0444">Lipid biosynthesis</keyword>
<keyword id="KW-0443">Lipid metabolism</keyword>
<keyword id="KW-0594">Phospholipid biosynthesis</keyword>
<keyword id="KW-1208">Phospholipid metabolism</keyword>
<keyword id="KW-0808">Transferase</keyword>
<name>PLSX_FRAP2</name>
<proteinExistence type="inferred from homology"/>
<gene>
    <name evidence="1" type="primary">plsX</name>
    <name type="ordered locus">Fphi_1352</name>
</gene>
<dbReference type="EC" id="2.3.1.274" evidence="1"/>
<dbReference type="EMBL" id="CP000937">
    <property type="protein sequence ID" value="ABZ87577.1"/>
    <property type="molecule type" value="Genomic_DNA"/>
</dbReference>
<dbReference type="SMR" id="B0TY16"/>
<dbReference type="KEGG" id="fph:Fphi_1352"/>
<dbReference type="eggNOG" id="COG0416">
    <property type="taxonomic scope" value="Bacteria"/>
</dbReference>
<dbReference type="HOGENOM" id="CLU_039379_1_0_6"/>
<dbReference type="UniPathway" id="UPA00085"/>
<dbReference type="GO" id="GO:0005737">
    <property type="term" value="C:cytoplasm"/>
    <property type="evidence" value="ECO:0007669"/>
    <property type="project" value="UniProtKB-SubCell"/>
</dbReference>
<dbReference type="GO" id="GO:0043811">
    <property type="term" value="F:phosphate:acyl-[acyl carrier protein] acyltransferase activity"/>
    <property type="evidence" value="ECO:0007669"/>
    <property type="project" value="UniProtKB-UniRule"/>
</dbReference>
<dbReference type="GO" id="GO:0006633">
    <property type="term" value="P:fatty acid biosynthetic process"/>
    <property type="evidence" value="ECO:0007669"/>
    <property type="project" value="UniProtKB-UniRule"/>
</dbReference>
<dbReference type="GO" id="GO:0008654">
    <property type="term" value="P:phospholipid biosynthetic process"/>
    <property type="evidence" value="ECO:0007669"/>
    <property type="project" value="UniProtKB-KW"/>
</dbReference>
<dbReference type="Gene3D" id="3.40.718.10">
    <property type="entry name" value="Isopropylmalate Dehydrogenase"/>
    <property type="match status" value="1"/>
</dbReference>
<dbReference type="HAMAP" id="MF_00019">
    <property type="entry name" value="PlsX"/>
    <property type="match status" value="1"/>
</dbReference>
<dbReference type="InterPro" id="IPR003664">
    <property type="entry name" value="FA_synthesis"/>
</dbReference>
<dbReference type="InterPro" id="IPR012281">
    <property type="entry name" value="Phospholipid_synth_PlsX-like"/>
</dbReference>
<dbReference type="NCBIfam" id="TIGR00182">
    <property type="entry name" value="plsX"/>
    <property type="match status" value="1"/>
</dbReference>
<dbReference type="PANTHER" id="PTHR30100">
    <property type="entry name" value="FATTY ACID/PHOSPHOLIPID SYNTHESIS PROTEIN PLSX"/>
    <property type="match status" value="1"/>
</dbReference>
<dbReference type="PANTHER" id="PTHR30100:SF1">
    <property type="entry name" value="PHOSPHATE ACYLTRANSFERASE"/>
    <property type="match status" value="1"/>
</dbReference>
<dbReference type="Pfam" id="PF02504">
    <property type="entry name" value="FA_synthesis"/>
    <property type="match status" value="1"/>
</dbReference>
<dbReference type="PIRSF" id="PIRSF002465">
    <property type="entry name" value="Phsphlp_syn_PlsX"/>
    <property type="match status" value="1"/>
</dbReference>
<dbReference type="SUPFAM" id="SSF53659">
    <property type="entry name" value="Isocitrate/Isopropylmalate dehydrogenase-like"/>
    <property type="match status" value="1"/>
</dbReference>
<feature type="chain" id="PRO_1000074166" description="Phosphate acyltransferase">
    <location>
        <begin position="1"/>
        <end position="348"/>
    </location>
</feature>
<accession>B0TY16</accession>